<comment type="function">
    <text evidence="3">Exhibits oxaloacetate decarboxylase activity. Lacks any detectable aldolase activity with 4-hydroxy-2-oxopentanoate (HOPA), 4-hydroxy-2-oxohexanoate (HOHA) or other 4-hydroxy-2-oxoacids.</text>
</comment>
<comment type="catalytic activity">
    <reaction evidence="3">
        <text>oxaloacetate + H(+) = pyruvate + CO2</text>
        <dbReference type="Rhea" id="RHEA:15641"/>
        <dbReference type="ChEBI" id="CHEBI:15361"/>
        <dbReference type="ChEBI" id="CHEBI:15378"/>
        <dbReference type="ChEBI" id="CHEBI:16452"/>
        <dbReference type="ChEBI" id="CHEBI:16526"/>
        <dbReference type="EC" id="4.1.1.112"/>
    </reaction>
</comment>
<comment type="cofactor">
    <cofactor evidence="3">
        <name>a divalent metal cation</name>
        <dbReference type="ChEBI" id="CHEBI:60240"/>
    </cofactor>
    <text evidence="3">Activity is metal ion dependent and can be restored upon addition of excess Mn(2+).</text>
</comment>
<comment type="activity regulation">
    <text evidence="3">Activity is abolished upon incubation with Chelex and EDTA.</text>
</comment>
<comment type="biophysicochemical properties">
    <kinetics>
        <text evidence="3">kcat is 0.49 sec(-1).</text>
    </kinetics>
</comment>
<comment type="subunit">
    <text evidence="3">Homodimer.</text>
</comment>
<comment type="similarity">
    <text evidence="5">Belongs to the 4-hydroxy-2-oxovalerate aldolase family.</text>
</comment>
<name>OAADC_MYCTU</name>
<proteinExistence type="evidence at protein level"/>
<gene>
    <name evidence="4" type="primary">mhpE</name>
    <name evidence="6" type="ordered locus">Rv3469c</name>
</gene>
<evidence type="ECO:0000250" key="1">
    <source>
        <dbReference type="UniProtKB" id="P51016"/>
    </source>
</evidence>
<evidence type="ECO:0000255" key="2">
    <source>
        <dbReference type="PROSITE-ProRule" id="PRU01151"/>
    </source>
</evidence>
<evidence type="ECO:0000269" key="3">
    <source>
    </source>
</evidence>
<evidence type="ECO:0000303" key="4">
    <source>
    </source>
</evidence>
<evidence type="ECO:0000305" key="5"/>
<evidence type="ECO:0000312" key="6">
    <source>
        <dbReference type="EMBL" id="CCP46291.1"/>
    </source>
</evidence>
<keyword id="KW-0456">Lyase</keyword>
<keyword id="KW-0464">Manganese</keyword>
<keyword id="KW-0479">Metal-binding</keyword>
<keyword id="KW-1185">Reference proteome</keyword>
<feature type="chain" id="PRO_0000450804" description="Oxaloacetate decarboxylase">
    <location>
        <begin position="1"/>
        <end position="336"/>
    </location>
</feature>
<feature type="domain" description="Pyruvate carboxyltransferase" evidence="2">
    <location>
        <begin position="10"/>
        <end position="258"/>
    </location>
</feature>
<feature type="binding site" evidence="1">
    <location>
        <position position="19"/>
    </location>
    <ligand>
        <name>Mn(2+)</name>
        <dbReference type="ChEBI" id="CHEBI:29035"/>
    </ligand>
</feature>
<feature type="binding site" evidence="1">
    <location>
        <position position="197"/>
    </location>
    <ligand>
        <name>Mn(2+)</name>
        <dbReference type="ChEBI" id="CHEBI:29035"/>
    </ligand>
</feature>
<feature type="binding site" evidence="1">
    <location>
        <position position="199"/>
    </location>
    <ligand>
        <name>Mn(2+)</name>
        <dbReference type="ChEBI" id="CHEBI:29035"/>
    </ligand>
</feature>
<feature type="site" description="Transition state stabilizer" evidence="1">
    <location>
        <position position="18"/>
    </location>
</feature>
<organism>
    <name type="scientific">Mycobacterium tuberculosis (strain ATCC 25618 / H37Rv)</name>
    <dbReference type="NCBI Taxonomy" id="83332"/>
    <lineage>
        <taxon>Bacteria</taxon>
        <taxon>Bacillati</taxon>
        <taxon>Actinomycetota</taxon>
        <taxon>Actinomycetes</taxon>
        <taxon>Mycobacteriales</taxon>
        <taxon>Mycobacteriaceae</taxon>
        <taxon>Mycobacterium</taxon>
        <taxon>Mycobacterium tuberculosis complex</taxon>
    </lineage>
</organism>
<dbReference type="EC" id="4.1.1.112" evidence="3"/>
<dbReference type="EMBL" id="AL123456">
    <property type="protein sequence ID" value="CCP46291.1"/>
    <property type="molecule type" value="Genomic_DNA"/>
</dbReference>
<dbReference type="RefSeq" id="NP_217986.1">
    <property type="nucleotide sequence ID" value="NC_000962.3"/>
</dbReference>
<dbReference type="RefSeq" id="WP_003900067.1">
    <property type="nucleotide sequence ID" value="NZ_NVQJ01000087.1"/>
</dbReference>
<dbReference type="SMR" id="O06334"/>
<dbReference type="FunCoup" id="O06334">
    <property type="interactions" value="200"/>
</dbReference>
<dbReference type="STRING" id="83332.Rv3469c"/>
<dbReference type="PaxDb" id="83332-Rv3469c"/>
<dbReference type="DNASU" id="888074"/>
<dbReference type="GeneID" id="888074"/>
<dbReference type="KEGG" id="mtu:Rv3469c"/>
<dbReference type="KEGG" id="mtv:RVBD_3469c"/>
<dbReference type="PATRIC" id="fig|83332.111.peg.3863"/>
<dbReference type="TubercuList" id="Rv3469c"/>
<dbReference type="eggNOG" id="COG0119">
    <property type="taxonomic scope" value="Bacteria"/>
</dbReference>
<dbReference type="InParanoid" id="O06334"/>
<dbReference type="OrthoDB" id="9803573at2"/>
<dbReference type="PhylomeDB" id="O06334"/>
<dbReference type="Proteomes" id="UP000001584">
    <property type="component" value="Chromosome"/>
</dbReference>
<dbReference type="GO" id="GO:0003852">
    <property type="term" value="F:2-isopropylmalate synthase activity"/>
    <property type="evidence" value="ECO:0000318"/>
    <property type="project" value="GO_Central"/>
</dbReference>
<dbReference type="GO" id="GO:0046872">
    <property type="term" value="F:metal ion binding"/>
    <property type="evidence" value="ECO:0007669"/>
    <property type="project" value="UniProtKB-KW"/>
</dbReference>
<dbReference type="GO" id="GO:0008948">
    <property type="term" value="F:oxaloacetate decarboxylase activity"/>
    <property type="evidence" value="ECO:0007669"/>
    <property type="project" value="UniProtKB-EC"/>
</dbReference>
<dbReference type="GO" id="GO:0009098">
    <property type="term" value="P:L-leucine biosynthetic process"/>
    <property type="evidence" value="ECO:0000318"/>
    <property type="project" value="GO_Central"/>
</dbReference>
<dbReference type="Gene3D" id="3.20.20.70">
    <property type="entry name" value="Aldolase class I"/>
    <property type="match status" value="1"/>
</dbReference>
<dbReference type="InterPro" id="IPR050073">
    <property type="entry name" value="2-IPM_HCS-like"/>
</dbReference>
<dbReference type="InterPro" id="IPR013785">
    <property type="entry name" value="Aldolase_TIM"/>
</dbReference>
<dbReference type="InterPro" id="IPR000891">
    <property type="entry name" value="PYR_CT"/>
</dbReference>
<dbReference type="NCBIfam" id="NF006049">
    <property type="entry name" value="PRK08195.1"/>
    <property type="match status" value="1"/>
</dbReference>
<dbReference type="PANTHER" id="PTHR10277:SF9">
    <property type="entry name" value="2-ISOPROPYLMALATE SYNTHASE 1, CHLOROPLASTIC-RELATED"/>
    <property type="match status" value="1"/>
</dbReference>
<dbReference type="PANTHER" id="PTHR10277">
    <property type="entry name" value="HOMOCITRATE SYNTHASE-RELATED"/>
    <property type="match status" value="1"/>
</dbReference>
<dbReference type="Pfam" id="PF00682">
    <property type="entry name" value="HMGL-like"/>
    <property type="match status" value="1"/>
</dbReference>
<dbReference type="SUPFAM" id="SSF51569">
    <property type="entry name" value="Aldolase"/>
    <property type="match status" value="1"/>
</dbReference>
<dbReference type="PROSITE" id="PS50991">
    <property type="entry name" value="PYR_CT"/>
    <property type="match status" value="1"/>
</dbReference>
<reference key="1">
    <citation type="journal article" date="1998" name="Nature">
        <title>Deciphering the biology of Mycobacterium tuberculosis from the complete genome sequence.</title>
        <authorList>
            <person name="Cole S.T."/>
            <person name="Brosch R."/>
            <person name="Parkhill J."/>
            <person name="Garnier T."/>
            <person name="Churcher C.M."/>
            <person name="Harris D.E."/>
            <person name="Gordon S.V."/>
            <person name="Eiglmeier K."/>
            <person name="Gas S."/>
            <person name="Barry C.E. III"/>
            <person name="Tekaia F."/>
            <person name="Badcock K."/>
            <person name="Basham D."/>
            <person name="Brown D."/>
            <person name="Chillingworth T."/>
            <person name="Connor R."/>
            <person name="Davies R.M."/>
            <person name="Devlin K."/>
            <person name="Feltwell T."/>
            <person name="Gentles S."/>
            <person name="Hamlin N."/>
            <person name="Holroyd S."/>
            <person name="Hornsby T."/>
            <person name="Jagels K."/>
            <person name="Krogh A."/>
            <person name="McLean J."/>
            <person name="Moule S."/>
            <person name="Murphy L.D."/>
            <person name="Oliver S."/>
            <person name="Osborne J."/>
            <person name="Quail M.A."/>
            <person name="Rajandream M.A."/>
            <person name="Rogers J."/>
            <person name="Rutter S."/>
            <person name="Seeger K."/>
            <person name="Skelton S."/>
            <person name="Squares S."/>
            <person name="Squares R."/>
            <person name="Sulston J.E."/>
            <person name="Taylor K."/>
            <person name="Whitehead S."/>
            <person name="Barrell B.G."/>
        </authorList>
    </citation>
    <scope>NUCLEOTIDE SEQUENCE [LARGE SCALE GENOMIC DNA]</scope>
    <source>
        <strain>ATCC 25618 / H37Rv</strain>
    </source>
</reference>
<reference key="2">
    <citation type="journal article" date="2013" name="Biochemistry">
        <title>Characterization of an aldolase-dehydrogenase complex from the cholesterol degradation pathway of Mycobacterium tuberculosis.</title>
        <authorList>
            <person name="Carere J."/>
            <person name="McKenna S.E."/>
            <person name="Kimber M.S."/>
            <person name="Seah S.Y."/>
        </authorList>
    </citation>
    <scope>FUNCTION</scope>
    <scope>CATALYTIC ACTIVITY</scope>
    <scope>COFACTOR</scope>
    <scope>ACTIVITY REGULATION</scope>
    <scope>BIOPHYSICOCHEMICAL PROPERTIES</scope>
    <scope>SUBUNIT</scope>
    <source>
        <strain>H37Rv</strain>
    </source>
</reference>
<accession>O06334</accession>
<accession>F2GIM3</accession>
<accession>I6YC77</accession>
<sequence>MLMTATHREPIVLDTTVRDGSYAVNFQYTDDDVRRIVGDLDAAGIPYIEIGHGVTIGAAAAQGPAAHTDEEYFRAARSVVRNARLGAVIVPALARIETVDLAGDYLDFLRICVIATEFELVMPFVERAQSKGLEVSIQLVKSHLFEPDVLAAAGKRARDVGVRIVYVVDTTGTFLPEDARRYVEALRGASDVSVGFHGHNNLAMAVANTLEAFDAGADFLDGTLMGFGRGAGNCQIECLVAALQRRGHLAAVDLDRIFDAARSDMLGRSPQSYGIDPWEISFGFHGLDSLQVEHLRAAAQQAGLSVSHVIRQTAKSHAGQWLSPQDIDRVVVGMRA</sequence>
<protein>
    <recommendedName>
        <fullName evidence="4">Oxaloacetate decarboxylase</fullName>
        <shortName evidence="5">OAA decarboxylase</shortName>
        <ecNumber evidence="3">4.1.1.112</ecNumber>
    </recommendedName>
</protein>